<accession>A7ZVL9</accession>
<organism>
    <name type="scientific">Escherichia coli O139:H28 (strain E24377A / ETEC)</name>
    <dbReference type="NCBI Taxonomy" id="331111"/>
    <lineage>
        <taxon>Bacteria</taxon>
        <taxon>Pseudomonadati</taxon>
        <taxon>Pseudomonadota</taxon>
        <taxon>Gammaproteobacteria</taxon>
        <taxon>Enterobacterales</taxon>
        <taxon>Enterobacteriaceae</taxon>
        <taxon>Escherichia</taxon>
    </lineage>
</organism>
<comment type="function">
    <text evidence="1">Catalyzes the dehydration of D-mannonate.</text>
</comment>
<comment type="catalytic activity">
    <reaction evidence="1">
        <text>D-mannonate = 2-dehydro-3-deoxy-D-gluconate + H2O</text>
        <dbReference type="Rhea" id="RHEA:20097"/>
        <dbReference type="ChEBI" id="CHEBI:15377"/>
        <dbReference type="ChEBI" id="CHEBI:17767"/>
        <dbReference type="ChEBI" id="CHEBI:57990"/>
        <dbReference type="EC" id="4.2.1.8"/>
    </reaction>
</comment>
<comment type="cofactor">
    <cofactor evidence="1">
        <name>Fe(2+)</name>
        <dbReference type="ChEBI" id="CHEBI:29033"/>
    </cofactor>
    <cofactor evidence="1">
        <name>Mn(2+)</name>
        <dbReference type="ChEBI" id="CHEBI:29035"/>
    </cofactor>
</comment>
<comment type="pathway">
    <text evidence="1">Carbohydrate metabolism; pentose and glucuronate interconversion.</text>
</comment>
<comment type="similarity">
    <text evidence="1">Belongs to the mannonate dehydratase family.</text>
</comment>
<proteinExistence type="inferred from homology"/>
<evidence type="ECO:0000255" key="1">
    <source>
        <dbReference type="HAMAP-Rule" id="MF_00106"/>
    </source>
</evidence>
<gene>
    <name evidence="1" type="primary">uxuA</name>
    <name type="ordered locus">EcE24377A_4920</name>
</gene>
<protein>
    <recommendedName>
        <fullName evidence="1">Mannonate dehydratase</fullName>
        <ecNumber evidence="1">4.2.1.8</ecNumber>
    </recommendedName>
    <alternativeName>
        <fullName evidence="1">D-mannonate hydro-lyase</fullName>
    </alternativeName>
</protein>
<reference key="1">
    <citation type="journal article" date="2008" name="J. Bacteriol.">
        <title>The pangenome structure of Escherichia coli: comparative genomic analysis of E. coli commensal and pathogenic isolates.</title>
        <authorList>
            <person name="Rasko D.A."/>
            <person name="Rosovitz M.J."/>
            <person name="Myers G.S.A."/>
            <person name="Mongodin E.F."/>
            <person name="Fricke W.F."/>
            <person name="Gajer P."/>
            <person name="Crabtree J."/>
            <person name="Sebaihia M."/>
            <person name="Thomson N.R."/>
            <person name="Chaudhuri R."/>
            <person name="Henderson I.R."/>
            <person name="Sperandio V."/>
            <person name="Ravel J."/>
        </authorList>
    </citation>
    <scope>NUCLEOTIDE SEQUENCE [LARGE SCALE GENOMIC DNA]</scope>
    <source>
        <strain>E24377A / ETEC</strain>
    </source>
</reference>
<name>UXUA_ECO24</name>
<keyword id="KW-0408">Iron</keyword>
<keyword id="KW-0456">Lyase</keyword>
<keyword id="KW-0464">Manganese</keyword>
<keyword id="KW-1185">Reference proteome</keyword>
<dbReference type="EC" id="4.2.1.8" evidence="1"/>
<dbReference type="EMBL" id="CP000800">
    <property type="protein sequence ID" value="ABV16869.1"/>
    <property type="molecule type" value="Genomic_DNA"/>
</dbReference>
<dbReference type="RefSeq" id="WP_000438582.1">
    <property type="nucleotide sequence ID" value="NC_009801.1"/>
</dbReference>
<dbReference type="SMR" id="A7ZVL9"/>
<dbReference type="GeneID" id="93777517"/>
<dbReference type="KEGG" id="ecw:EcE24377A_4920"/>
<dbReference type="HOGENOM" id="CLU_058621_2_0_6"/>
<dbReference type="UniPathway" id="UPA00246"/>
<dbReference type="Proteomes" id="UP000001122">
    <property type="component" value="Chromosome"/>
</dbReference>
<dbReference type="GO" id="GO:0008198">
    <property type="term" value="F:ferrous iron binding"/>
    <property type="evidence" value="ECO:0007669"/>
    <property type="project" value="TreeGrafter"/>
</dbReference>
<dbReference type="GO" id="GO:0030145">
    <property type="term" value="F:manganese ion binding"/>
    <property type="evidence" value="ECO:0007669"/>
    <property type="project" value="TreeGrafter"/>
</dbReference>
<dbReference type="GO" id="GO:0008927">
    <property type="term" value="F:mannonate dehydratase activity"/>
    <property type="evidence" value="ECO:0007669"/>
    <property type="project" value="UniProtKB-UniRule"/>
</dbReference>
<dbReference type="GO" id="GO:0042840">
    <property type="term" value="P:D-glucuronate catabolic process"/>
    <property type="evidence" value="ECO:0007669"/>
    <property type="project" value="TreeGrafter"/>
</dbReference>
<dbReference type="FunFam" id="3.20.20.150:FF:000004">
    <property type="entry name" value="Mannonate dehydratase"/>
    <property type="match status" value="1"/>
</dbReference>
<dbReference type="FunFam" id="3.20.20.150:FF:000005">
    <property type="entry name" value="Mannonate dehydratase"/>
    <property type="match status" value="1"/>
</dbReference>
<dbReference type="Gene3D" id="3.20.20.150">
    <property type="entry name" value="Divalent-metal-dependent TIM barrel enzymes"/>
    <property type="match status" value="2"/>
</dbReference>
<dbReference type="HAMAP" id="MF_00106">
    <property type="entry name" value="UxuA"/>
    <property type="match status" value="1"/>
</dbReference>
<dbReference type="InterPro" id="IPR004628">
    <property type="entry name" value="Man_deHydtase"/>
</dbReference>
<dbReference type="InterPro" id="IPR036237">
    <property type="entry name" value="Xyl_isomerase-like_sf"/>
</dbReference>
<dbReference type="NCBIfam" id="NF003027">
    <property type="entry name" value="PRK03906.1"/>
    <property type="match status" value="1"/>
</dbReference>
<dbReference type="NCBIfam" id="TIGR00695">
    <property type="entry name" value="uxuA"/>
    <property type="match status" value="1"/>
</dbReference>
<dbReference type="PANTHER" id="PTHR30387">
    <property type="entry name" value="MANNONATE DEHYDRATASE"/>
    <property type="match status" value="1"/>
</dbReference>
<dbReference type="PANTHER" id="PTHR30387:SF2">
    <property type="entry name" value="MANNONATE DEHYDRATASE"/>
    <property type="match status" value="1"/>
</dbReference>
<dbReference type="Pfam" id="PF03786">
    <property type="entry name" value="UxuA"/>
    <property type="match status" value="1"/>
</dbReference>
<dbReference type="PIRSF" id="PIRSF016049">
    <property type="entry name" value="Man_dehyd"/>
    <property type="match status" value="1"/>
</dbReference>
<dbReference type="SUPFAM" id="SSF51658">
    <property type="entry name" value="Xylose isomerase-like"/>
    <property type="match status" value="1"/>
</dbReference>
<feature type="chain" id="PRO_1000057700" description="Mannonate dehydratase">
    <location>
        <begin position="1"/>
        <end position="394"/>
    </location>
</feature>
<sequence length="394" mass="44824">MEQTWRWYGPNDPVSLADVRQAGATGVVTALHHIPNGEVWSVEEILKRKAIVEDAGLVWSVVESVPIHEDIKTHTGNYEQWIANYQQTLRNLAQCGIRTVCYNFMPVLDWTRTDLEYVLPDGSKALRFDQIEFAAFEMHILKRPGAEADYTEEEIAQAAERFATMSDEDKARLTRNIIAGLPGAEEGYTLDQFRKHLELYKDIDKAKLRENFAVFLKAIIPVAEEVGVRMAVHPDDPPRPILGLPRIVSTIEDMQWMVDTVNSMANGFTMCTGSYGVRADNDLVDMIKQFGPRIYFTHLRSTMREDNPKTFHEAAHLNGDVDMYEVVKAIVEEEHRRKAEGKEDLIPMRPDHGHQMLDDLKKKTNPGYSAIGRLKGLAEVRGVELAIQRAFFSR</sequence>